<protein>
    <recommendedName>
        <fullName>Cytotoxin homolog S3C2</fullName>
    </recommendedName>
</protein>
<evidence type="ECO:0000250" key="1">
    <source>
        <dbReference type="UniProtKB" id="P60301"/>
    </source>
</evidence>
<evidence type="ECO:0000269" key="2">
    <source>
    </source>
</evidence>
<evidence type="ECO:0000305" key="3"/>
<feature type="chain" id="PRO_0000093522" description="Cytotoxin homolog S3C2" evidence="2">
    <location>
        <begin position="1"/>
        <end position="63"/>
    </location>
</feature>
<feature type="disulfide bond" evidence="1">
    <location>
        <begin position="3"/>
        <end position="22"/>
    </location>
</feature>
<feature type="disulfide bond" evidence="1">
    <location>
        <begin position="15"/>
        <end position="40"/>
    </location>
</feature>
<feature type="disulfide bond" evidence="1">
    <location>
        <begin position="44"/>
        <end position="55"/>
    </location>
</feature>
<feature type="disulfide bond" evidence="1">
    <location>
        <begin position="56"/>
        <end position="61"/>
    </location>
</feature>
<dbReference type="PIR" id="JS0298">
    <property type="entry name" value="JS0298"/>
</dbReference>
<dbReference type="SMR" id="P19003"/>
<dbReference type="GO" id="GO:0005576">
    <property type="term" value="C:extracellular region"/>
    <property type="evidence" value="ECO:0007669"/>
    <property type="project" value="UniProtKB-SubCell"/>
</dbReference>
<dbReference type="GO" id="GO:0090729">
    <property type="term" value="F:toxin activity"/>
    <property type="evidence" value="ECO:0007669"/>
    <property type="project" value="UniProtKB-KW"/>
</dbReference>
<dbReference type="CDD" id="cd00206">
    <property type="entry name" value="TFP_snake_toxin"/>
    <property type="match status" value="1"/>
</dbReference>
<dbReference type="FunFam" id="2.10.60.10:FF:000024">
    <property type="entry name" value="Cytotoxin 1"/>
    <property type="match status" value="1"/>
</dbReference>
<dbReference type="Gene3D" id="2.10.60.10">
    <property type="entry name" value="CD59"/>
    <property type="match status" value="1"/>
</dbReference>
<dbReference type="InterPro" id="IPR003572">
    <property type="entry name" value="Cytotoxin_Cobra"/>
</dbReference>
<dbReference type="InterPro" id="IPR003571">
    <property type="entry name" value="Snake_3FTx"/>
</dbReference>
<dbReference type="InterPro" id="IPR045860">
    <property type="entry name" value="Snake_toxin-like_sf"/>
</dbReference>
<dbReference type="InterPro" id="IPR018354">
    <property type="entry name" value="Snake_toxin_con_site"/>
</dbReference>
<dbReference type="InterPro" id="IPR054131">
    <property type="entry name" value="Toxin_cobra-type"/>
</dbReference>
<dbReference type="Pfam" id="PF21947">
    <property type="entry name" value="Toxin_cobra-type"/>
    <property type="match status" value="1"/>
</dbReference>
<dbReference type="PRINTS" id="PR00282">
    <property type="entry name" value="CYTOTOXIN"/>
</dbReference>
<dbReference type="SUPFAM" id="SSF57302">
    <property type="entry name" value="Snake toxin-like"/>
    <property type="match status" value="1"/>
</dbReference>
<dbReference type="PROSITE" id="PS00272">
    <property type="entry name" value="SNAKE_TOXIN"/>
    <property type="match status" value="1"/>
</dbReference>
<proteinExistence type="evidence at protein level"/>
<name>3SOG_ASPSC</name>
<accession>P19003</accession>
<comment type="subcellular location">
    <subcellularLocation>
        <location evidence="2">Secreted</location>
    </subcellularLocation>
</comment>
<comment type="tissue specificity">
    <text evidence="3">Expressed by the venom gland.</text>
</comment>
<comment type="toxic dose">
    <text evidence="2">LD(50) is 6.6 mg/kg by intravenous injection.</text>
</comment>
<comment type="miscellaneous">
    <text evidence="3">Is classified as a P-type cytotoxin, since a proline residue stands at position 31 (Pro-31 in standard classification).</text>
</comment>
<comment type="similarity">
    <text evidence="3">Belongs to the three-finger toxin family. Short-chain subfamily. Orphan group XVI sub-subfamily.</text>
</comment>
<sequence length="63" mass="7173">RKCLNTPLPLFYKTCPEGKDLCYKMNFKLLPKKLSIKRGCTDTCPKSSLLVKVVCCDTDKCNK</sequence>
<reference key="1">
    <citation type="journal article" date="1988" name="Int. J. Biochem.">
        <title>Snake venom toxins -- II. The primary structures of cytotoxin homologues S3C2 and S4C8 from Aspidelaps scutatus (shield or shield-nose snake) venom.</title>
        <authorList>
            <person name="Joubert F.J."/>
        </authorList>
    </citation>
    <scope>PROTEIN SEQUENCE</scope>
    <scope>TOXIC DOSE</scope>
    <scope>SUBCELLULAR LOCATION</scope>
    <source>
        <tissue>Venom</tissue>
    </source>
</reference>
<keyword id="KW-0903">Direct protein sequencing</keyword>
<keyword id="KW-1015">Disulfide bond</keyword>
<keyword id="KW-0964">Secreted</keyword>
<keyword id="KW-0800">Toxin</keyword>
<organism>
    <name type="scientific">Aspidelaps scutatus</name>
    <name type="common">Shield-nose snake</name>
    <dbReference type="NCBI Taxonomy" id="8607"/>
    <lineage>
        <taxon>Eukaryota</taxon>
        <taxon>Metazoa</taxon>
        <taxon>Chordata</taxon>
        <taxon>Craniata</taxon>
        <taxon>Vertebrata</taxon>
        <taxon>Euteleostomi</taxon>
        <taxon>Lepidosauria</taxon>
        <taxon>Squamata</taxon>
        <taxon>Bifurcata</taxon>
        <taxon>Unidentata</taxon>
        <taxon>Episquamata</taxon>
        <taxon>Toxicofera</taxon>
        <taxon>Serpentes</taxon>
        <taxon>Colubroidea</taxon>
        <taxon>Elapidae</taxon>
        <taxon>Elapidae incertae sedis</taxon>
        <taxon>Aspidelaps</taxon>
    </lineage>
</organism>